<evidence type="ECO:0000255" key="1">
    <source>
        <dbReference type="PROSITE-ProRule" id="PRU00042"/>
    </source>
</evidence>
<evidence type="ECO:0000256" key="2">
    <source>
        <dbReference type="SAM" id="MobiDB-lite"/>
    </source>
</evidence>
<evidence type="ECO:0000269" key="3">
    <source>
    </source>
</evidence>
<evidence type="ECO:0000269" key="4">
    <source>
    </source>
</evidence>
<evidence type="ECO:0000269" key="5">
    <source>
    </source>
</evidence>
<evidence type="ECO:0000269" key="6">
    <source>
    </source>
</evidence>
<evidence type="ECO:0000269" key="7">
    <source>
    </source>
</evidence>
<evidence type="ECO:0000269" key="8">
    <source>
    </source>
</evidence>
<evidence type="ECO:0000269" key="9">
    <source>
    </source>
</evidence>
<evidence type="ECO:0000269" key="10">
    <source>
    </source>
</evidence>
<evidence type="ECO:0000269" key="11">
    <source>
    </source>
</evidence>
<evidence type="ECO:0000269" key="12">
    <source>
    </source>
</evidence>
<evidence type="ECO:0000269" key="13">
    <source>
    </source>
</evidence>
<evidence type="ECO:0000303" key="14">
    <source>
    </source>
</evidence>
<evidence type="ECO:0000305" key="15"/>
<evidence type="ECO:0000312" key="16">
    <source>
        <dbReference type="EMBL" id="AAC37255.1"/>
    </source>
</evidence>
<evidence type="ECO:0000312" key="17">
    <source>
        <dbReference type="Proteomes" id="UP000001940"/>
    </source>
</evidence>
<evidence type="ECO:0000312" key="18">
    <source>
        <dbReference type="WormBase" id="W03C9.4a"/>
    </source>
</evidence>
<evidence type="ECO:0000312" key="19">
    <source>
        <dbReference type="WormBase" id="W03C9.4b"/>
    </source>
</evidence>
<evidence type="ECO:0000312" key="20">
    <source>
        <dbReference type="WormBase" id="W03C9.4c"/>
    </source>
</evidence>
<comment type="function">
    <text evidence="3 4 5 6 7 8 9 10 12 13">Transcription factor which regulates the expression of various genes, including those involved in cuticle synthesis and maintenance, such as collagens, and in lipid metabolism (PubMed:27401555, PubMed:29604168, PubMed:31974205, PubMed:7671813). Binds to promoter regions of genes, at 5'-[(T/G)TTTTTT(A/T/C/G)]-3' consensus sequences (PubMed:25905672, PubMed:29604168). Heterochronic protein which controls the choice of stage specific cell fates, including at the juvenile to adult transition (PubMed:32223899, PubMed:7671813). Promotes differentiation, together with transcriptional cofactor mab-10, perhaps as part of a transcriptional complex (PubMed:21862562). Required for vulval morphogenesis and egg laying; perhaps by acting in a subset of the lateral seam cells (PubMed:9334281). Involved in the exit of seam cells from the cell cycle (PubMed:32223899). Required for specification of uterine pi-cell fate, acting upstream of lin-12 Notch signaling, perhaps via maintenance of lag-2 expression in the anchor cell (AC) (PubMed:11114514). Involved in morphogenesis of the specialized male tail used in mating (PubMed:9986728). Acts cell non-autonomously from the hypodermis to regulate expression of genes in the intestine, including genes involved in lipid metabolism (PubMed:27401555, PubMed:31974205). May regulate vitellogenesis via the mTORC2 signaling mediated pathway, independently of daf-16 (PubMed:27401555). May promote nuclear accumulation of mab-10 in seam cells post-transcriptionally (PubMed:21862562). Dispensable for seam cell fusion (PubMed:32223899).</text>
</comment>
<comment type="function">
    <molecule>Isoform c</molecule>
    <text evidence="9">Required for seam cell fusion.</text>
</comment>
<comment type="subunit">
    <text evidence="4">Interacts (via C-terminus) with transcription cofactor mab-10.</text>
</comment>
<comment type="subcellular location">
    <subcellularLocation>
        <location evidence="9 11 12 13">Nucleus</location>
    </subcellularLocation>
    <text evidence="11">Accumulates in nuclei of hypodermal cells in a temporally restricted fashion, beginning during the larval L4 stage.</text>
</comment>
<comment type="alternative products">
    <event type="alternative splicing"/>
    <isoform>
        <id>G5EGB2-1</id>
        <name evidence="18">a</name>
        <sequence type="displayed"/>
    </isoform>
    <isoform>
        <id>G5EGB2-2</id>
        <name evidence="19">b</name>
        <sequence type="described" ref="VSP_061058"/>
    </isoform>
    <isoform>
        <id>G5EGB2-3</id>
        <name evidence="20">c</name>
        <sequence type="described" ref="VSP_061057"/>
    </isoform>
</comment>
<comment type="tissue specificity">
    <text evidence="11">Expressed in lateral hypodermal seam cells (at protein level).</text>
</comment>
<comment type="developmental stage">
    <text evidence="6 10 11 12 13">Expressed in all larval stages, increasing in level from L1 to L4 and then diminishing in younger and older adults (PubMed:7671813). Expressed in hermaphrodite lateral hypodermal seam cells during the larval L3- to L4-molt stage and into adulthood (at protein level) (PubMed:8756296). Expressed in the hypodermal cells of the head (hyp1-hyp6), tail (hyp8-hyp12), and the large hypodermal syncytium covering most of the animal (hyp7) (at protein level) (PubMed:27401555, PubMed:8756296). Also expressed in some non-hypodermal cells during stages L2 to L4 (at protein level) (PubMed:8756296, PubMed:9334281). Expressed in the anchor cell beginning at the L2 molt or early L3 stage (PubMed:9334281). Male-specific expression in the linker cell (LC), positioned at the tip of the growing end of the gonad at stage L3 (at protein level). Male-specific expression in ventral cord neurons from late L3 stage (at protein level) (PubMed:9986728).</text>
</comment>
<comment type="developmental stage">
    <molecule>Isoform c</molecule>
    <text evidence="9 10">Expressed in all larval stages, increasing in level from L2 to L4 and then diminishing in younger and older adults (PubMed:7671813). Expressed at low level in lateral seam cells in larval L3 stage and up-regulated during L4, including in the major hypodermal syncytium hyp7 (PubMed:32223899).</text>
</comment>
<comment type="disruption phenotype">
    <text evidence="6 7 8">RNAi-mediated knockdown abolished expression of collagen col-38 at mid-to-late larval stage L4 (PubMed:29604168). Knockdown, whether untargeted, or hypodermis-specific, represses intestinal genes involved in fatty acid metabolism and beta-oxidation in the L4 larval stage (PubMed:31974205). Drastically reduces expression of the vitellogenin genes (PubMed:27401555). Knockdown causes transcription factor pqm-1 to accumulate in the intestinal nuclei at adulthood, but has no effect on daf-16 localization (PubMed:27401555).</text>
</comment>
<gene>
    <name evidence="18" type="primary">lin-29</name>
    <name evidence="14" type="synonym">lin-29b</name>
    <name evidence="18" type="ORF">W03C9.4</name>
</gene>
<protein>
    <recommendedName>
        <fullName evidence="15">Zinc finger transcription factor lin-29</fullName>
    </recommendedName>
    <alternativeName>
        <fullName evidence="18">abnormal cell lineage 29</fullName>
    </alternativeName>
</protein>
<dbReference type="EMBL" id="L39212">
    <property type="protein sequence ID" value="AAC37255.1"/>
    <property type="molecule type" value="mRNA"/>
</dbReference>
<dbReference type="EMBL" id="BX284602">
    <property type="protein sequence ID" value="CAB60308.2"/>
    <property type="molecule type" value="Genomic_DNA"/>
</dbReference>
<dbReference type="EMBL" id="BX284602">
    <property type="protein sequence ID" value="CAN99713.1"/>
    <property type="molecule type" value="Genomic_DNA"/>
</dbReference>
<dbReference type="EMBL" id="BX284602">
    <property type="protein sequence ID" value="CBY85351.1"/>
    <property type="molecule type" value="Genomic_DNA"/>
</dbReference>
<dbReference type="RefSeq" id="NP_001122649.1">
    <molecule id="G5EGB2-2"/>
    <property type="nucleotide sequence ID" value="NM_001129177.4"/>
</dbReference>
<dbReference type="RefSeq" id="NP_001254324.1">
    <molecule id="G5EGB2-3"/>
    <property type="nucleotide sequence ID" value="NM_001267395.3"/>
</dbReference>
<dbReference type="RefSeq" id="NP_496545.1">
    <property type="nucleotide sequence ID" value="NM_064144.5"/>
</dbReference>
<dbReference type="SMR" id="G5EGB2"/>
<dbReference type="FunCoup" id="G5EGB2">
    <property type="interactions" value="428"/>
</dbReference>
<dbReference type="IntAct" id="G5EGB2">
    <property type="interactions" value="1"/>
</dbReference>
<dbReference type="STRING" id="6239.W03C9.4a.1"/>
<dbReference type="PaxDb" id="6239-W03C9.4a"/>
<dbReference type="EnsemblMetazoa" id="W03C9.4a.1">
    <molecule id="G5EGB2-1"/>
    <property type="protein sequence ID" value="W03C9.4a.1"/>
    <property type="gene ID" value="WBGene00003015"/>
</dbReference>
<dbReference type="EnsemblMetazoa" id="W03C9.4b.1">
    <molecule id="G5EGB2-2"/>
    <property type="protein sequence ID" value="W03C9.4b.1"/>
    <property type="gene ID" value="WBGene00003015"/>
</dbReference>
<dbReference type="EnsemblMetazoa" id="W03C9.4c.1">
    <molecule id="G5EGB2-3"/>
    <property type="protein sequence ID" value="W03C9.4c.1"/>
    <property type="gene ID" value="WBGene00003015"/>
</dbReference>
<dbReference type="GeneID" id="174830"/>
<dbReference type="KEGG" id="cel:CELE_W03C9.4"/>
<dbReference type="AGR" id="WB:WBGene00003015"/>
<dbReference type="CTD" id="174830"/>
<dbReference type="WormBase" id="W03C9.4a">
    <property type="protein sequence ID" value="CE28257"/>
    <property type="gene ID" value="WBGene00003015"/>
    <property type="gene designation" value="lin-29"/>
</dbReference>
<dbReference type="WormBase" id="W03C9.4b">
    <property type="protein sequence ID" value="CE41270"/>
    <property type="gene ID" value="WBGene00003015"/>
    <property type="gene designation" value="lin-29"/>
</dbReference>
<dbReference type="WormBase" id="W03C9.4c">
    <property type="protein sequence ID" value="CE45652"/>
    <property type="gene ID" value="WBGene00003015"/>
    <property type="gene designation" value="lin-29"/>
</dbReference>
<dbReference type="eggNOG" id="KOG1721">
    <property type="taxonomic scope" value="Eukaryota"/>
</dbReference>
<dbReference type="GeneTree" id="ENSGT00940000174257"/>
<dbReference type="HOGENOM" id="CLU_043863_0_0_1"/>
<dbReference type="InParanoid" id="G5EGB2"/>
<dbReference type="OMA" id="TKHADRS"/>
<dbReference type="OrthoDB" id="6077919at2759"/>
<dbReference type="PhylomeDB" id="G5EGB2"/>
<dbReference type="PRO" id="PR:G5EGB2"/>
<dbReference type="Proteomes" id="UP000001940">
    <property type="component" value="Chromosome II"/>
</dbReference>
<dbReference type="Bgee" id="WBGene00003015">
    <property type="expression patterns" value="Expressed in larva and 3 other cell types or tissues"/>
</dbReference>
<dbReference type="ExpressionAtlas" id="G5EGB2">
    <property type="expression patterns" value="baseline and differential"/>
</dbReference>
<dbReference type="GO" id="GO:0005634">
    <property type="term" value="C:nucleus"/>
    <property type="evidence" value="ECO:0000314"/>
    <property type="project" value="UniProtKB"/>
</dbReference>
<dbReference type="GO" id="GO:0001228">
    <property type="term" value="F:DNA-binding transcription activator activity, RNA polymerase II-specific"/>
    <property type="evidence" value="ECO:0000315"/>
    <property type="project" value="UniProtKB"/>
</dbReference>
<dbReference type="GO" id="GO:0000978">
    <property type="term" value="F:RNA polymerase II cis-regulatory region sequence-specific DNA binding"/>
    <property type="evidence" value="ECO:0000315"/>
    <property type="project" value="UniProtKB"/>
</dbReference>
<dbReference type="GO" id="GO:0000977">
    <property type="term" value="F:RNA polymerase II transcription regulatory region sequence-specific DNA binding"/>
    <property type="evidence" value="ECO:0000314"/>
    <property type="project" value="WormBase"/>
</dbReference>
<dbReference type="GO" id="GO:0043565">
    <property type="term" value="F:sequence-specific DNA binding"/>
    <property type="evidence" value="ECO:0000314"/>
    <property type="project" value="UniProtKB"/>
</dbReference>
<dbReference type="GO" id="GO:0008270">
    <property type="term" value="F:zinc ion binding"/>
    <property type="evidence" value="ECO:0007669"/>
    <property type="project" value="UniProtKB-KW"/>
</dbReference>
<dbReference type="GO" id="GO:0001708">
    <property type="term" value="P:cell fate specification"/>
    <property type="evidence" value="ECO:0000315"/>
    <property type="project" value="UniProtKB"/>
</dbReference>
<dbReference type="GO" id="GO:0140253">
    <property type="term" value="P:cell-cell fusion"/>
    <property type="evidence" value="ECO:0000315"/>
    <property type="project" value="UniProtKB"/>
</dbReference>
<dbReference type="GO" id="GO:0032964">
    <property type="term" value="P:collagen biosynthetic process"/>
    <property type="evidence" value="ECO:0000315"/>
    <property type="project" value="UniProtKB"/>
</dbReference>
<dbReference type="GO" id="GO:0042335">
    <property type="term" value="P:cuticle development"/>
    <property type="evidence" value="ECO:0000315"/>
    <property type="project" value="UniProtKB"/>
</dbReference>
<dbReference type="GO" id="GO:0035017">
    <property type="term" value="P:cuticle pattern formation"/>
    <property type="evidence" value="ECO:0000315"/>
    <property type="project" value="UniProtKB"/>
</dbReference>
<dbReference type="GO" id="GO:0010458">
    <property type="term" value="P:exit from mitosis"/>
    <property type="evidence" value="ECO:0000315"/>
    <property type="project" value="UniProtKB"/>
</dbReference>
<dbReference type="GO" id="GO:0006629">
    <property type="term" value="P:lipid metabolic process"/>
    <property type="evidence" value="ECO:0000315"/>
    <property type="project" value="UniProtKB"/>
</dbReference>
<dbReference type="GO" id="GO:0048808">
    <property type="term" value="P:male genitalia morphogenesis"/>
    <property type="evidence" value="ECO:0000315"/>
    <property type="project" value="UniProtKB"/>
</dbReference>
<dbReference type="GO" id="GO:0022404">
    <property type="term" value="P:molting cycle process"/>
    <property type="evidence" value="ECO:0000315"/>
    <property type="project" value="UniProtKB"/>
</dbReference>
<dbReference type="GO" id="GO:0061067">
    <property type="term" value="P:negative regulation of dauer larval development"/>
    <property type="evidence" value="ECO:0000315"/>
    <property type="project" value="WormBase"/>
</dbReference>
<dbReference type="GO" id="GO:0010628">
    <property type="term" value="P:positive regulation of gene expression"/>
    <property type="evidence" value="ECO:0000315"/>
    <property type="project" value="UniProtKB"/>
</dbReference>
<dbReference type="GO" id="GO:1903188">
    <property type="term" value="P:positive regulation of vitellogenesis"/>
    <property type="evidence" value="ECO:0000315"/>
    <property type="project" value="UniProtKB"/>
</dbReference>
<dbReference type="GO" id="GO:0010623">
    <property type="term" value="P:programmed cell death involved in cell development"/>
    <property type="evidence" value="ECO:0000316"/>
    <property type="project" value="UniProtKB"/>
</dbReference>
<dbReference type="GO" id="GO:0110011">
    <property type="term" value="P:regulation of basement membrane organization"/>
    <property type="evidence" value="ECO:0000315"/>
    <property type="project" value="UniProtKB"/>
</dbReference>
<dbReference type="GO" id="GO:0040034">
    <property type="term" value="P:regulation of development, heterochronic"/>
    <property type="evidence" value="ECO:0000315"/>
    <property type="project" value="WormBase"/>
</dbReference>
<dbReference type="GO" id="GO:0090444">
    <property type="term" value="P:regulation of nematode larval development, heterochronic"/>
    <property type="evidence" value="ECO:0000315"/>
    <property type="project" value="UniProtKB"/>
</dbReference>
<dbReference type="GO" id="GO:0008593">
    <property type="term" value="P:regulation of Notch signaling pathway"/>
    <property type="evidence" value="ECO:0000315"/>
    <property type="project" value="UniProtKB"/>
</dbReference>
<dbReference type="GO" id="GO:0043067">
    <property type="term" value="P:regulation of programmed cell death"/>
    <property type="evidence" value="ECO:0000315"/>
    <property type="project" value="WormBase"/>
</dbReference>
<dbReference type="GO" id="GO:0006357">
    <property type="term" value="P:regulation of transcription by RNA polymerase II"/>
    <property type="evidence" value="ECO:0000315"/>
    <property type="project" value="UniProtKB"/>
</dbReference>
<dbReference type="GO" id="GO:0040028">
    <property type="term" value="P:regulation of vulval development"/>
    <property type="evidence" value="ECO:0000315"/>
    <property type="project" value="UniProtKB"/>
</dbReference>
<dbReference type="FunFam" id="3.30.160.60:FF:002922">
    <property type="entry name" value="Transcription factor"/>
    <property type="match status" value="1"/>
</dbReference>
<dbReference type="FunFam" id="3.30.160.60:FF:000158">
    <property type="entry name" value="Zinc finger protein 362"/>
    <property type="match status" value="1"/>
</dbReference>
<dbReference type="FunFam" id="3.30.160.60:FF:001498">
    <property type="entry name" value="Zinc finger protein 404"/>
    <property type="match status" value="1"/>
</dbReference>
<dbReference type="FunFam" id="3.30.160.60:FF:001172">
    <property type="entry name" value="Zinc finger protein rotund"/>
    <property type="match status" value="1"/>
</dbReference>
<dbReference type="Gene3D" id="3.30.160.60">
    <property type="entry name" value="Classic Zinc Finger"/>
    <property type="match status" value="4"/>
</dbReference>
<dbReference type="InterPro" id="IPR036236">
    <property type="entry name" value="Znf_C2H2_sf"/>
</dbReference>
<dbReference type="InterPro" id="IPR013087">
    <property type="entry name" value="Znf_C2H2_type"/>
</dbReference>
<dbReference type="PANTHER" id="PTHR23235">
    <property type="entry name" value="KRUEPPEL-LIKE TRANSCRIPTION FACTOR"/>
    <property type="match status" value="1"/>
</dbReference>
<dbReference type="PANTHER" id="PTHR23235:SF142">
    <property type="entry name" value="ZINC FINGER PROTEIN 384"/>
    <property type="match status" value="1"/>
</dbReference>
<dbReference type="Pfam" id="PF00096">
    <property type="entry name" value="zf-C2H2"/>
    <property type="match status" value="4"/>
</dbReference>
<dbReference type="SMART" id="SM00355">
    <property type="entry name" value="ZnF_C2H2"/>
    <property type="match status" value="5"/>
</dbReference>
<dbReference type="SUPFAM" id="SSF57667">
    <property type="entry name" value="beta-beta-alpha zinc fingers"/>
    <property type="match status" value="3"/>
</dbReference>
<dbReference type="PROSITE" id="PS00028">
    <property type="entry name" value="ZINC_FINGER_C2H2_1"/>
    <property type="match status" value="5"/>
</dbReference>
<dbReference type="PROSITE" id="PS50157">
    <property type="entry name" value="ZINC_FINGER_C2H2_2"/>
    <property type="match status" value="5"/>
</dbReference>
<reference evidence="16" key="1">
    <citation type="journal article" date="1995" name="Development">
        <title>The heterochronic gene lin-29 encodes a zinc finger protein that controls a terminal differentiation event in Caenorhabditis elegans.</title>
        <authorList>
            <person name="Rougvie A.E."/>
            <person name="Ambros V."/>
        </authorList>
    </citation>
    <scope>NUCLEOTIDE SEQUENCE [MRNA] (ISOFORM A)</scope>
    <scope>FUNCTION</scope>
    <scope>DEVELOPMENTAL STAGE (ISOFORMS A AND C)</scope>
    <scope>MUTAGENESIS OF 294-ARG--TYR-459</scope>
    <source>
        <strain evidence="16">Bristol N2</strain>
    </source>
</reference>
<reference evidence="17" key="2">
    <citation type="journal article" date="1998" name="Science">
        <title>Genome sequence of the nematode C. elegans: a platform for investigating biology.</title>
        <authorList>
            <consortium name="The C. elegans sequencing consortium"/>
        </authorList>
    </citation>
    <scope>NUCLEOTIDE SEQUENCE [LARGE SCALE GENOMIC DNA]</scope>
    <source>
        <strain evidence="17">Bristol N2</strain>
    </source>
</reference>
<reference evidence="15" key="3">
    <citation type="journal article" date="1996" name="Development">
        <title>Stage-specific accumulation of the terminal differentiation factor LIN-29 during Caenorhabditis elegans development.</title>
        <authorList>
            <person name="Bettinger J.C."/>
            <person name="Lee K."/>
            <person name="Rougvie A.E."/>
        </authorList>
    </citation>
    <scope>SUBCELLULAR LOCATION</scope>
    <scope>TISSUE SPECIFICITY</scope>
    <scope>DEVELOPMENTAL STAGE</scope>
</reference>
<reference evidence="15" key="4">
    <citation type="journal article" date="1997" name="Development">
        <title>The terminal differentiation factor LIN-29 is required for proper vulval morphogenesis and egg laying in Caenorhabditis elegans.</title>
        <authorList>
            <person name="Bettinger J.C."/>
            <person name="Euling S."/>
            <person name="Rougvie A.E."/>
        </authorList>
    </citation>
    <scope>FUNCTION</scope>
    <scope>SUBCELLULAR LOCATION</scope>
    <scope>DEVELOPMENTAL STAGE</scope>
    <scope>MUTAGENESIS OF 144-GLN--TYR-459</scope>
</reference>
<reference evidence="15" key="5">
    <citation type="journal article" date="1999" name="Dev. Biol.">
        <title>The LIN-29 transcription factor is required for proper morphogenesis of the Caenorhabditis elegans male tail.</title>
        <authorList>
            <person name="Euling S."/>
            <person name="Bettinger J.C."/>
            <person name="Rougvie A.E."/>
        </authorList>
    </citation>
    <scope>FUNCTION</scope>
    <scope>SUBCELLULAR LOCATION</scope>
    <scope>DEVELOPMENTAL STAGE</scope>
    <scope>MUTAGENESIS OF 294-ARG--TYR-459</scope>
</reference>
<reference evidence="15" key="6">
    <citation type="journal article" date="2000" name="Curr. Biol.">
        <title>The Caenorhabditis elegans heterochronic gene lin-29 coordinates the vulval-uterine-epidermal connections.</title>
        <authorList>
            <person name="Newman A.P."/>
            <person name="Inoue T."/>
            <person name="Wang M."/>
            <person name="Sternberg P.W."/>
        </authorList>
    </citation>
    <scope>FUNCTION</scope>
    <scope>MUTAGENESIS OF CYS-182</scope>
</reference>
<reference evidence="15" key="7">
    <citation type="journal article" date="2011" name="Development">
        <title>MAB-10/NAB acts with LIN-29/EGR to regulate terminal differentiation and the transition from larva to adult in C. elegans.</title>
        <authorList>
            <person name="Harris D.T."/>
            <person name="Horvitz H.R."/>
        </authorList>
    </citation>
    <scope>FUNCTION</scope>
    <scope>INTERACTION WITH MAB-10</scope>
</reference>
<reference evidence="15" key="8">
    <citation type="journal article" date="2015" name="Elife">
        <title>Mapping and analysis of Caenorhabditis elegans transcription factor sequence specificities.</title>
        <authorList>
            <person name="Narasimhan K."/>
            <person name="Lambert S.A."/>
            <person name="Yang A.W."/>
            <person name="Riddell J."/>
            <person name="Mnaimneh S."/>
            <person name="Zheng H."/>
            <person name="Albu M."/>
            <person name="Najafabadi H.S."/>
            <person name="Reece-Hoyes J.S."/>
            <person name="Fuxman Bass J.I."/>
            <person name="Walhout A.J."/>
            <person name="Weirauch M.T."/>
            <person name="Hughes T.R."/>
        </authorList>
    </citation>
    <scope>FUNCTION</scope>
</reference>
<reference evidence="15" key="9">
    <citation type="journal article" date="2016" name="Genes Dev.">
        <title>A microRNA program in the C. elegans hypodermis couples to intestinal mTORC2/PQM-1 signaling to modulate fat transport.</title>
        <authorList>
            <person name="Dowen R.H."/>
            <person name="Breen P.C."/>
            <person name="Tullius T."/>
            <person name="Conery A.L."/>
            <person name="Ruvkun G."/>
        </authorList>
    </citation>
    <scope>FUNCTION</scope>
    <scope>DEVELOPMENTAL STAGE</scope>
    <scope>DISRUPTION PHENOTYPE</scope>
</reference>
<reference evidence="15" key="10">
    <citation type="journal article" date="2018" name="Genesis">
        <title>Regulation of C. elegans L4 cuticle collagen genes by the heterochronic protein LIN-29.</title>
        <authorList>
            <person name="Abete-Luzi P."/>
            <person name="Eisenmann D.M."/>
        </authorList>
    </citation>
    <scope>FUNCTION</scope>
    <scope>DISRUPTION PHENOTYPE</scope>
</reference>
<reference evidence="15" key="11">
    <citation type="journal article" date="2020" name="Elife">
        <title>A branched heterochronic pathway directs juvenile-to-adult transition through two LIN-29 isoforms.</title>
        <authorList>
            <person name="Azzi C."/>
            <person name="Aeschimann F."/>
            <person name="Neagu A."/>
            <person name="Grosshans H."/>
        </authorList>
    </citation>
    <scope>FUNCTION</scope>
    <scope>FUNCTION (ISOFORM C)</scope>
    <scope>SUBCELLULAR LOCATION</scope>
    <scope>DEVELOPMENTAL STAGE (ISOFORM C)</scope>
</reference>
<reference evidence="15" key="12">
    <citation type="journal article" date="2020" name="Genetics">
        <title>New Roles for the Heterochronic Transcription Factor LIN-29 in Cuticle Maintenance and Lipid Metabolism at the Larval-to-Adult Transition in Caenorhabditis elegans.</title>
        <authorList>
            <person name="Abete-Luzi P."/>
            <person name="Fukushige T."/>
            <person name="Yun S."/>
            <person name="Krause M.W."/>
            <person name="Eisenmann D.M."/>
        </authorList>
    </citation>
    <scope>FUNCTION</scope>
    <scope>DISRUPTION PHENOTYPE</scope>
</reference>
<proteinExistence type="evidence at protein level"/>
<name>LIN29_CAEEL</name>
<keyword id="KW-0025">Alternative splicing</keyword>
<keyword id="KW-0238">DNA-binding</keyword>
<keyword id="KW-0479">Metal-binding</keyword>
<keyword id="KW-0539">Nucleus</keyword>
<keyword id="KW-1185">Reference proteome</keyword>
<keyword id="KW-0677">Repeat</keyword>
<keyword id="KW-0804">Transcription</keyword>
<keyword id="KW-0805">Transcription regulation</keyword>
<keyword id="KW-0862">Zinc</keyword>
<keyword id="KW-0863">Zinc-finger</keyword>
<organism evidence="17">
    <name type="scientific">Caenorhabditis elegans</name>
    <dbReference type="NCBI Taxonomy" id="6239"/>
    <lineage>
        <taxon>Eukaryota</taxon>
        <taxon>Metazoa</taxon>
        <taxon>Ecdysozoa</taxon>
        <taxon>Nematoda</taxon>
        <taxon>Chromadorea</taxon>
        <taxon>Rhabditida</taxon>
        <taxon>Rhabditina</taxon>
        <taxon>Rhabditomorpha</taxon>
        <taxon>Rhabditoidea</taxon>
        <taxon>Rhabditidae</taxon>
        <taxon>Peloderinae</taxon>
        <taxon>Caenorhabditis</taxon>
    </lineage>
</organism>
<sequence length="459" mass="50177">MDQTVLDSAFNSPVDSGIAGTTTGSGSTTHFGVGTNFKVSVRSSSRSTDGTDSTDGANSDNVTGSTGSTPAHHSITNLNMALSQHSIDSATAASSTNPFPHFNQADLLNFHQNSLLPHHMFSQFGRYPQFEQKPDVGVLQQQMQMREAKPYKCTQCVKAFANSSYLSQHMRIHLGIKPFGPCNYCGKKFTQLSHLQQHIRTHTGEKPYKCKFTGCDKAFSQLSNLQSHSRCHQTDKPFKCNSCYKCFTDEQSLLDHIPKHKESKHLKIHICPFCGKSYTQQTYLQKHMTKHADRSKASNFGNDVVPADPFDPSLLSWNPMQGMGDNAHDSSSFNISSLTDQFAANTMIGSQSTNYNPAFQNSAFSQLFNIRNNRYLSEYPTSTKNGERAPGFNMITPLENIQRYNGSSSSATAVVTATGSAVVSSTPSSTSSSSAGSSSSQGGVFNPQSLINNMKNHSY</sequence>
<accession>G5EGB2</accession>
<accession>E6N0V9</accession>
<accession>G5EGU6</accession>
<feature type="chain" id="PRO_0000452803" description="Zinc finger transcription factor lin-29">
    <location>
        <begin position="1"/>
        <end position="459"/>
    </location>
</feature>
<feature type="zinc finger region" description="C2H2-type 1" evidence="1">
    <location>
        <begin position="151"/>
        <end position="173"/>
    </location>
</feature>
<feature type="zinc finger region" description="C2H2-type 2" evidence="1">
    <location>
        <begin position="180"/>
        <end position="202"/>
    </location>
</feature>
<feature type="zinc finger region" description="C2H2-type 3" evidence="1">
    <location>
        <begin position="208"/>
        <end position="232"/>
    </location>
</feature>
<feature type="zinc finger region" description="C2H2-type 4" evidence="1">
    <location>
        <begin position="238"/>
        <end position="260"/>
    </location>
</feature>
<feature type="zinc finger region" description="C2H2-type 5" evidence="1">
    <location>
        <begin position="269"/>
        <end position="291"/>
    </location>
</feature>
<feature type="region of interest" description="Disordered" evidence="2">
    <location>
        <begin position="1"/>
        <end position="73"/>
    </location>
</feature>
<feature type="region of interest" description="Interacts with mab-10" evidence="4">
    <location>
        <begin position="390"/>
        <end position="406"/>
    </location>
</feature>
<feature type="region of interest" description="Disordered" evidence="2">
    <location>
        <begin position="423"/>
        <end position="459"/>
    </location>
</feature>
<feature type="compositionally biased region" description="Polar residues" evidence="2">
    <location>
        <begin position="1"/>
        <end position="14"/>
    </location>
</feature>
<feature type="compositionally biased region" description="Low complexity" evidence="2">
    <location>
        <begin position="16"/>
        <end position="56"/>
    </location>
</feature>
<feature type="compositionally biased region" description="Polar residues" evidence="2">
    <location>
        <begin position="57"/>
        <end position="73"/>
    </location>
</feature>
<feature type="compositionally biased region" description="Low complexity" evidence="2">
    <location>
        <begin position="423"/>
        <end position="444"/>
    </location>
</feature>
<feature type="compositionally biased region" description="Polar residues" evidence="2">
    <location>
        <begin position="446"/>
        <end position="459"/>
    </location>
</feature>
<feature type="splice variant" id="VSP_061057" description="In isoform c." evidence="15">
    <location>
        <begin position="1"/>
        <end position="142"/>
    </location>
</feature>
<feature type="splice variant" id="VSP_061058" description="In isoform b." evidence="15">
    <original>FKVSV</original>
    <variation>L</variation>
    <location>
        <begin position="37"/>
        <end position="41"/>
    </location>
</feature>
<feature type="mutagenesis site" description="In ga94; displays vulval defects and are unable to lay eggs, but still executes lateral hypodermal terminal differentiation." evidence="12">
    <location>
        <begin position="144"/>
        <end position="459"/>
    </location>
</feature>
<feature type="mutagenesis site" description="In sy292; egg-laying defective. Fails to specify uterine pi-cell fate, has an abnormal uterine-vulval connection and vulval gene expression patterns are altered." evidence="3">
    <original>C</original>
    <variation>Y</variation>
    <location>
        <position position="182"/>
    </location>
</feature>
<feature type="mutagenesis site" description="In n546; fails to execute adult-specific terminal differentiation at the larval L4 molt and instead reiterates larval differentiation program. On a him-5 mutant background, males failed to mate with unc-13 hermaphrodites. Males have shortened spicules, male-specific mating structures. Males also exhibit delayed ray formation and gonad migration defects. Up-regulates nhr-23 and nhr-25 about 12-fold relative to the wild type in adult hermaphrodites." evidence="10 13">
    <location>
        <begin position="294"/>
        <end position="459"/>
    </location>
</feature>